<proteinExistence type="inferred from homology"/>
<keyword id="KW-0687">Ribonucleoprotein</keyword>
<keyword id="KW-0689">Ribosomal protein</keyword>
<accession>B8DJG5</accession>
<reference key="1">
    <citation type="submission" date="2008-10" db="EMBL/GenBank/DDBJ databases">
        <title>Complete sequence of Desulfovibrio vulgaris str. 'Miyazaki F'.</title>
        <authorList>
            <person name="Lucas S."/>
            <person name="Copeland A."/>
            <person name="Lapidus A."/>
            <person name="Glavina del Rio T."/>
            <person name="Dalin E."/>
            <person name="Tice H."/>
            <person name="Bruce D."/>
            <person name="Goodwin L."/>
            <person name="Pitluck S."/>
            <person name="Sims D."/>
            <person name="Brettin T."/>
            <person name="Detter J.C."/>
            <person name="Han C."/>
            <person name="Larimer F."/>
            <person name="Land M."/>
            <person name="Hauser L."/>
            <person name="Kyrpides N."/>
            <person name="Mikhailova N."/>
            <person name="Hazen T.C."/>
            <person name="Richardson P."/>
        </authorList>
    </citation>
    <scope>NUCLEOTIDE SEQUENCE [LARGE SCALE GENOMIC DNA]</scope>
    <source>
        <strain>DSM 19637 / Miyazaki F</strain>
    </source>
</reference>
<name>RL28_NITV9</name>
<dbReference type="EMBL" id="CP001197">
    <property type="protein sequence ID" value="ACL10042.1"/>
    <property type="molecule type" value="Genomic_DNA"/>
</dbReference>
<dbReference type="SMR" id="B8DJG5"/>
<dbReference type="STRING" id="883.DvMF_3105"/>
<dbReference type="KEGG" id="dvm:DvMF_3105"/>
<dbReference type="eggNOG" id="COG0227">
    <property type="taxonomic scope" value="Bacteria"/>
</dbReference>
<dbReference type="HOGENOM" id="CLU_064548_7_0_7"/>
<dbReference type="OrthoDB" id="9805609at2"/>
<dbReference type="GO" id="GO:1990904">
    <property type="term" value="C:ribonucleoprotein complex"/>
    <property type="evidence" value="ECO:0007669"/>
    <property type="project" value="UniProtKB-KW"/>
</dbReference>
<dbReference type="GO" id="GO:0005840">
    <property type="term" value="C:ribosome"/>
    <property type="evidence" value="ECO:0007669"/>
    <property type="project" value="UniProtKB-KW"/>
</dbReference>
<dbReference type="GO" id="GO:0003735">
    <property type="term" value="F:structural constituent of ribosome"/>
    <property type="evidence" value="ECO:0007669"/>
    <property type="project" value="InterPro"/>
</dbReference>
<dbReference type="GO" id="GO:0006412">
    <property type="term" value="P:translation"/>
    <property type="evidence" value="ECO:0007669"/>
    <property type="project" value="UniProtKB-UniRule"/>
</dbReference>
<dbReference type="Gene3D" id="2.30.170.40">
    <property type="entry name" value="Ribosomal protein L28/L24"/>
    <property type="match status" value="1"/>
</dbReference>
<dbReference type="HAMAP" id="MF_00373">
    <property type="entry name" value="Ribosomal_bL28"/>
    <property type="match status" value="1"/>
</dbReference>
<dbReference type="InterPro" id="IPR050096">
    <property type="entry name" value="Bacterial_rp_bL28"/>
</dbReference>
<dbReference type="InterPro" id="IPR026569">
    <property type="entry name" value="Ribosomal_bL28"/>
</dbReference>
<dbReference type="InterPro" id="IPR034704">
    <property type="entry name" value="Ribosomal_bL28/bL31-like_sf"/>
</dbReference>
<dbReference type="InterPro" id="IPR001383">
    <property type="entry name" value="Ribosomal_bL28_bact-type"/>
</dbReference>
<dbReference type="InterPro" id="IPR037147">
    <property type="entry name" value="Ribosomal_bL28_sf"/>
</dbReference>
<dbReference type="NCBIfam" id="TIGR00009">
    <property type="entry name" value="L28"/>
    <property type="match status" value="1"/>
</dbReference>
<dbReference type="PANTHER" id="PTHR39080">
    <property type="entry name" value="50S RIBOSOMAL PROTEIN L28"/>
    <property type="match status" value="1"/>
</dbReference>
<dbReference type="PANTHER" id="PTHR39080:SF1">
    <property type="entry name" value="LARGE RIBOSOMAL SUBUNIT PROTEIN BL28A"/>
    <property type="match status" value="1"/>
</dbReference>
<dbReference type="Pfam" id="PF00830">
    <property type="entry name" value="Ribosomal_L28"/>
    <property type="match status" value="1"/>
</dbReference>
<dbReference type="SUPFAM" id="SSF143800">
    <property type="entry name" value="L28p-like"/>
    <property type="match status" value="1"/>
</dbReference>
<sequence length="69" mass="7685">MSKQCDVCGKKAQVGHHVSHSNIKTKRRFEPNLQSVRHQYPNGEVKTLSVCTRCLRSGAVVKPAVRKVA</sequence>
<gene>
    <name evidence="1" type="primary">rpmB</name>
    <name type="ordered locus">DvMF_3105</name>
</gene>
<organism>
    <name type="scientific">Nitratidesulfovibrio vulgaris (strain DSM 19637 / Miyazaki F)</name>
    <name type="common">Desulfovibrio vulgaris</name>
    <dbReference type="NCBI Taxonomy" id="883"/>
    <lineage>
        <taxon>Bacteria</taxon>
        <taxon>Pseudomonadati</taxon>
        <taxon>Thermodesulfobacteriota</taxon>
        <taxon>Desulfovibrionia</taxon>
        <taxon>Desulfovibrionales</taxon>
        <taxon>Desulfovibrionaceae</taxon>
        <taxon>Nitratidesulfovibrio</taxon>
    </lineage>
</organism>
<evidence type="ECO:0000255" key="1">
    <source>
        <dbReference type="HAMAP-Rule" id="MF_00373"/>
    </source>
</evidence>
<evidence type="ECO:0000305" key="2"/>
<comment type="similarity">
    <text evidence="1">Belongs to the bacterial ribosomal protein bL28 family.</text>
</comment>
<feature type="chain" id="PRO_1000121622" description="Large ribosomal subunit protein bL28">
    <location>
        <begin position="1"/>
        <end position="69"/>
    </location>
</feature>
<protein>
    <recommendedName>
        <fullName evidence="1">Large ribosomal subunit protein bL28</fullName>
    </recommendedName>
    <alternativeName>
        <fullName evidence="2">50S ribosomal protein L28</fullName>
    </alternativeName>
</protein>